<evidence type="ECO:0000255" key="1">
    <source>
        <dbReference type="HAMAP-Rule" id="MF_01371"/>
    </source>
</evidence>
<evidence type="ECO:0000305" key="2"/>
<sequence length="56" mass="6431">MIKVKLVRSRIGCNPNQRRTLDALGLRKIRQEKTFEDNAVVRGMIAKVVHLVEVTE</sequence>
<keyword id="KW-1185">Reference proteome</keyword>
<keyword id="KW-0687">Ribonucleoprotein</keyword>
<keyword id="KW-0689">Ribosomal protein</keyword>
<reference key="1">
    <citation type="journal article" date="2011" name="J. Bacteriol.">
        <title>Complete genome sequence and updated annotation of Desulfovibrio alaskensis G20.</title>
        <authorList>
            <person name="Hauser L.J."/>
            <person name="Land M.L."/>
            <person name="Brown S.D."/>
            <person name="Larimer F."/>
            <person name="Keller K.L."/>
            <person name="Rapp-Giles B.J."/>
            <person name="Price M.N."/>
            <person name="Lin M."/>
            <person name="Bruce D.C."/>
            <person name="Detter J.C."/>
            <person name="Tapia R."/>
            <person name="Han C.S."/>
            <person name="Goodwin L.A."/>
            <person name="Cheng J.F."/>
            <person name="Pitluck S."/>
            <person name="Copeland A."/>
            <person name="Lucas S."/>
            <person name="Nolan M."/>
            <person name="Lapidus A.L."/>
            <person name="Palumbo A.V."/>
            <person name="Wall J.D."/>
        </authorList>
    </citation>
    <scope>NUCLEOTIDE SEQUENCE [LARGE SCALE GENOMIC DNA]</scope>
    <source>
        <strain>ATCC BAA-1058 / DSM 17464 / G20</strain>
    </source>
</reference>
<dbReference type="EMBL" id="CP000112">
    <property type="protein sequence ID" value="ABB39036.1"/>
    <property type="molecule type" value="Genomic_DNA"/>
</dbReference>
<dbReference type="RefSeq" id="WP_011368127.1">
    <property type="nucleotide sequence ID" value="NC_007519.1"/>
</dbReference>
<dbReference type="SMR" id="Q30Z60"/>
<dbReference type="STRING" id="207559.Dde_2239"/>
<dbReference type="KEGG" id="dde:Dde_2239"/>
<dbReference type="eggNOG" id="COG1841">
    <property type="taxonomic scope" value="Bacteria"/>
</dbReference>
<dbReference type="HOGENOM" id="CLU_131047_1_3_7"/>
<dbReference type="Proteomes" id="UP000002710">
    <property type="component" value="Chromosome"/>
</dbReference>
<dbReference type="GO" id="GO:0015934">
    <property type="term" value="C:large ribosomal subunit"/>
    <property type="evidence" value="ECO:0007669"/>
    <property type="project" value="InterPro"/>
</dbReference>
<dbReference type="GO" id="GO:0003735">
    <property type="term" value="F:structural constituent of ribosome"/>
    <property type="evidence" value="ECO:0007669"/>
    <property type="project" value="InterPro"/>
</dbReference>
<dbReference type="GO" id="GO:0006412">
    <property type="term" value="P:translation"/>
    <property type="evidence" value="ECO:0007669"/>
    <property type="project" value="InterPro"/>
</dbReference>
<dbReference type="CDD" id="cd01658">
    <property type="entry name" value="Ribosomal_L30"/>
    <property type="match status" value="1"/>
</dbReference>
<dbReference type="Gene3D" id="3.30.1390.20">
    <property type="entry name" value="Ribosomal protein L30, ferredoxin-like fold domain"/>
    <property type="match status" value="1"/>
</dbReference>
<dbReference type="HAMAP" id="MF_01371_B">
    <property type="entry name" value="Ribosomal_uL30_B"/>
    <property type="match status" value="1"/>
</dbReference>
<dbReference type="InterPro" id="IPR036919">
    <property type="entry name" value="Ribo_uL30_ferredoxin-like_sf"/>
</dbReference>
<dbReference type="InterPro" id="IPR005996">
    <property type="entry name" value="Ribosomal_uL30_bac-type"/>
</dbReference>
<dbReference type="InterPro" id="IPR016082">
    <property type="entry name" value="Ribosomal_uL30_ferredoxin-like"/>
</dbReference>
<dbReference type="NCBIfam" id="TIGR01308">
    <property type="entry name" value="rpmD_bact"/>
    <property type="match status" value="1"/>
</dbReference>
<dbReference type="Pfam" id="PF00327">
    <property type="entry name" value="Ribosomal_L30"/>
    <property type="match status" value="1"/>
</dbReference>
<dbReference type="PIRSF" id="PIRSF002211">
    <property type="entry name" value="Ribosomal_L30_bac-type"/>
    <property type="match status" value="1"/>
</dbReference>
<dbReference type="SUPFAM" id="SSF55129">
    <property type="entry name" value="Ribosomal protein L30p/L7e"/>
    <property type="match status" value="1"/>
</dbReference>
<feature type="chain" id="PRO_0000273781" description="Large ribosomal subunit protein uL30">
    <location>
        <begin position="1"/>
        <end position="56"/>
    </location>
</feature>
<accession>Q30Z60</accession>
<comment type="subunit">
    <text evidence="1">Part of the 50S ribosomal subunit.</text>
</comment>
<comment type="similarity">
    <text evidence="1">Belongs to the universal ribosomal protein uL30 family.</text>
</comment>
<gene>
    <name evidence="1" type="primary">rpmD</name>
    <name type="ordered locus">Dde_2239</name>
</gene>
<proteinExistence type="inferred from homology"/>
<organism>
    <name type="scientific">Oleidesulfovibrio alaskensis (strain ATCC BAA-1058 / DSM 17464 / G20)</name>
    <name type="common">Desulfovibrio alaskensis</name>
    <dbReference type="NCBI Taxonomy" id="207559"/>
    <lineage>
        <taxon>Bacteria</taxon>
        <taxon>Pseudomonadati</taxon>
        <taxon>Thermodesulfobacteriota</taxon>
        <taxon>Desulfovibrionia</taxon>
        <taxon>Desulfovibrionales</taxon>
        <taxon>Desulfovibrionaceae</taxon>
        <taxon>Oleidesulfovibrio</taxon>
    </lineage>
</organism>
<name>RL30_OLEA2</name>
<protein>
    <recommendedName>
        <fullName evidence="1">Large ribosomal subunit protein uL30</fullName>
    </recommendedName>
    <alternativeName>
        <fullName evidence="2">50S ribosomal protein L30</fullName>
    </alternativeName>
</protein>